<sequence>MVIKFLSALILLLVTTAVQAERIRDLTSVQGVRQNSLIGYGLVVGLDGTGDQTTQTPFTTQTLNNMLSQLGITVPTGTNMQLKNVAAVMVTASLPPFGRQGQTIDVVVSSMGNAKSLRGGTLLMTPLKGVDSQVYALAQGNILVGGAGASAGGSSVQVNQLNGGRITNGAVIERELPSQFGVGNTLNLQLNDEDFSMAQQIADTINRVRGYGSATALDARTIQVRVPSGNSSQVRFLADIQNMQVNVTPQDAKVVINSRTGSVVMNREVTLDSCAVAQGNLSVTVNRQANVSQPDTPFGGGQTVVTPQTQIDLRQSGGSLQSVRSSASLNNVVRALNALGATPMDLMSILQSMQSAGCLRAKLEII</sequence>
<gene>
    <name evidence="1" type="primary">flgI</name>
    <name type="ordered locus">c1349</name>
</gene>
<reference key="1">
    <citation type="journal article" date="2002" name="Proc. Natl. Acad. Sci. U.S.A.">
        <title>Extensive mosaic structure revealed by the complete genome sequence of uropathogenic Escherichia coli.</title>
        <authorList>
            <person name="Welch R.A."/>
            <person name="Burland V."/>
            <person name="Plunkett G. III"/>
            <person name="Redford P."/>
            <person name="Roesch P."/>
            <person name="Rasko D."/>
            <person name="Buckles E.L."/>
            <person name="Liou S.-R."/>
            <person name="Boutin A."/>
            <person name="Hackett J."/>
            <person name="Stroud D."/>
            <person name="Mayhew G.F."/>
            <person name="Rose D.J."/>
            <person name="Zhou S."/>
            <person name="Schwartz D.C."/>
            <person name="Perna N.T."/>
            <person name="Mobley H.L.T."/>
            <person name="Donnenberg M.S."/>
            <person name="Blattner F.R."/>
        </authorList>
    </citation>
    <scope>NUCLEOTIDE SEQUENCE [LARGE SCALE GENOMIC DNA]</scope>
    <source>
        <strain>CFT073 / ATCC 700928 / UPEC</strain>
    </source>
</reference>
<evidence type="ECO:0000255" key="1">
    <source>
        <dbReference type="HAMAP-Rule" id="MF_00416"/>
    </source>
</evidence>
<comment type="function">
    <text evidence="1">Assembles around the rod to form the L-ring and probably protects the motor/basal body from shearing forces during rotation.</text>
</comment>
<comment type="subunit">
    <text evidence="1">The basal body constitutes a major portion of the flagellar organelle and consists of four rings (L,P,S, and M) mounted on a central rod.</text>
</comment>
<comment type="subcellular location">
    <subcellularLocation>
        <location evidence="1">Periplasm</location>
    </subcellularLocation>
    <subcellularLocation>
        <location evidence="1">Bacterial flagellum basal body</location>
    </subcellularLocation>
</comment>
<comment type="similarity">
    <text evidence="1">Belongs to the FlgI family.</text>
</comment>
<name>FLGI_ECOL6</name>
<proteinExistence type="inferred from homology"/>
<feature type="signal peptide" evidence="1">
    <location>
        <begin position="1"/>
        <end position="20"/>
    </location>
</feature>
<feature type="chain" id="PRO_0000009502" description="Flagellar P-ring protein">
    <location>
        <begin position="21"/>
        <end position="366"/>
    </location>
</feature>
<organism>
    <name type="scientific">Escherichia coli O6:H1 (strain CFT073 / ATCC 700928 / UPEC)</name>
    <dbReference type="NCBI Taxonomy" id="199310"/>
    <lineage>
        <taxon>Bacteria</taxon>
        <taxon>Pseudomonadati</taxon>
        <taxon>Pseudomonadota</taxon>
        <taxon>Gammaproteobacteria</taxon>
        <taxon>Enterobacterales</taxon>
        <taxon>Enterobacteriaceae</taxon>
        <taxon>Escherichia</taxon>
    </lineage>
</organism>
<accession>Q8CW54</accession>
<protein>
    <recommendedName>
        <fullName evidence="1">Flagellar P-ring protein</fullName>
    </recommendedName>
    <alternativeName>
        <fullName evidence="1">Basal body P-ring protein</fullName>
    </alternativeName>
</protein>
<keyword id="KW-0975">Bacterial flagellum</keyword>
<keyword id="KW-0574">Periplasm</keyword>
<keyword id="KW-1185">Reference proteome</keyword>
<keyword id="KW-0732">Signal</keyword>
<dbReference type="EMBL" id="AE014075">
    <property type="protein sequence ID" value="AAN79820.1"/>
    <property type="molecule type" value="Genomic_DNA"/>
</dbReference>
<dbReference type="SMR" id="Q8CW54"/>
<dbReference type="STRING" id="199310.c1349"/>
<dbReference type="KEGG" id="ecc:c1349"/>
<dbReference type="eggNOG" id="COG1706">
    <property type="taxonomic scope" value="Bacteria"/>
</dbReference>
<dbReference type="HOGENOM" id="CLU_045235_1_0_6"/>
<dbReference type="BioCyc" id="ECOL199310:C1349-MONOMER"/>
<dbReference type="Proteomes" id="UP000001410">
    <property type="component" value="Chromosome"/>
</dbReference>
<dbReference type="GO" id="GO:0009428">
    <property type="term" value="C:bacterial-type flagellum basal body, distal rod, P ring"/>
    <property type="evidence" value="ECO:0007669"/>
    <property type="project" value="InterPro"/>
</dbReference>
<dbReference type="GO" id="GO:0030288">
    <property type="term" value="C:outer membrane-bounded periplasmic space"/>
    <property type="evidence" value="ECO:0007669"/>
    <property type="project" value="InterPro"/>
</dbReference>
<dbReference type="GO" id="GO:0005198">
    <property type="term" value="F:structural molecule activity"/>
    <property type="evidence" value="ECO:0007669"/>
    <property type="project" value="InterPro"/>
</dbReference>
<dbReference type="GO" id="GO:0071973">
    <property type="term" value="P:bacterial-type flagellum-dependent cell motility"/>
    <property type="evidence" value="ECO:0007669"/>
    <property type="project" value="InterPro"/>
</dbReference>
<dbReference type="HAMAP" id="MF_00416">
    <property type="entry name" value="FlgI"/>
    <property type="match status" value="1"/>
</dbReference>
<dbReference type="InterPro" id="IPR001782">
    <property type="entry name" value="Flag_FlgI"/>
</dbReference>
<dbReference type="NCBIfam" id="NF003676">
    <property type="entry name" value="PRK05303.1"/>
    <property type="match status" value="1"/>
</dbReference>
<dbReference type="PANTHER" id="PTHR30381">
    <property type="entry name" value="FLAGELLAR P-RING PERIPLASMIC PROTEIN FLGI"/>
    <property type="match status" value="1"/>
</dbReference>
<dbReference type="PANTHER" id="PTHR30381:SF0">
    <property type="entry name" value="FLAGELLAR P-RING PROTEIN"/>
    <property type="match status" value="1"/>
</dbReference>
<dbReference type="Pfam" id="PF02119">
    <property type="entry name" value="FlgI"/>
    <property type="match status" value="1"/>
</dbReference>
<dbReference type="PRINTS" id="PR01010">
    <property type="entry name" value="FLGPRINGFLGI"/>
</dbReference>